<evidence type="ECO:0000256" key="1">
    <source>
        <dbReference type="SAM" id="MobiDB-lite"/>
    </source>
</evidence>
<evidence type="ECO:0000303" key="2">
    <source>
    </source>
</evidence>
<evidence type="ECO:0000305" key="3"/>
<sequence length="108" mass="12069">MAPKKDKVPPPSSKPAKSGGGKQKKKKWSKGKQKEKVNNMVLFDQGTYDKLLTEAPKFKLITPSILSDRMRINGSLARRAIRELMAKGLIRMVSAHSSQQIYTRATNT</sequence>
<comment type="alternative products">
    <event type="alternative splicing"/>
    <isoform>
        <id>Q9SIK2-1</id>
        <name>1</name>
        <sequence type="displayed"/>
    </isoform>
    <text>A number of isoforms are produced. According to EST sequences.</text>
</comment>
<comment type="similarity">
    <text evidence="3">Belongs to the eukaryotic ribosomal protein eS25 family.</text>
</comment>
<protein>
    <recommendedName>
        <fullName evidence="2">Small ribosomal subunit protein eS25y</fullName>
    </recommendedName>
    <alternativeName>
        <fullName>40S ribosomal protein S25-2</fullName>
    </alternativeName>
</protein>
<reference key="1">
    <citation type="journal article" date="1999" name="Nature">
        <title>Sequence and analysis of chromosome 2 of the plant Arabidopsis thaliana.</title>
        <authorList>
            <person name="Lin X."/>
            <person name="Kaul S."/>
            <person name="Rounsley S.D."/>
            <person name="Shea T.P."/>
            <person name="Benito M.-I."/>
            <person name="Town C.D."/>
            <person name="Fujii C.Y."/>
            <person name="Mason T.M."/>
            <person name="Bowman C.L."/>
            <person name="Barnstead M.E."/>
            <person name="Feldblyum T.V."/>
            <person name="Buell C.R."/>
            <person name="Ketchum K.A."/>
            <person name="Lee J.J."/>
            <person name="Ronning C.M."/>
            <person name="Koo H.L."/>
            <person name="Moffat K.S."/>
            <person name="Cronin L.A."/>
            <person name="Shen M."/>
            <person name="Pai G."/>
            <person name="Van Aken S."/>
            <person name="Umayam L."/>
            <person name="Tallon L.J."/>
            <person name="Gill J.E."/>
            <person name="Adams M.D."/>
            <person name="Carrera A.J."/>
            <person name="Creasy T.H."/>
            <person name="Goodman H.M."/>
            <person name="Somerville C.R."/>
            <person name="Copenhaver G.P."/>
            <person name="Preuss D."/>
            <person name="Nierman W.C."/>
            <person name="White O."/>
            <person name="Eisen J.A."/>
            <person name="Salzberg S.L."/>
            <person name="Fraser C.M."/>
            <person name="Venter J.C."/>
        </authorList>
    </citation>
    <scope>NUCLEOTIDE SEQUENCE [LARGE SCALE GENOMIC DNA]</scope>
    <source>
        <strain>cv. Columbia</strain>
    </source>
</reference>
<reference key="2">
    <citation type="journal article" date="2017" name="Plant J.">
        <title>Araport11: a complete reannotation of the Arabidopsis thaliana reference genome.</title>
        <authorList>
            <person name="Cheng C.Y."/>
            <person name="Krishnakumar V."/>
            <person name="Chan A.P."/>
            <person name="Thibaud-Nissen F."/>
            <person name="Schobel S."/>
            <person name="Town C.D."/>
        </authorList>
    </citation>
    <scope>GENOME REANNOTATION</scope>
    <source>
        <strain>cv. Columbia</strain>
    </source>
</reference>
<reference key="3">
    <citation type="journal article" date="2003" name="Science">
        <title>Empirical analysis of transcriptional activity in the Arabidopsis genome.</title>
        <authorList>
            <person name="Yamada K."/>
            <person name="Lim J."/>
            <person name="Dale J.M."/>
            <person name="Chen H."/>
            <person name="Shinn P."/>
            <person name="Palm C.J."/>
            <person name="Southwick A.M."/>
            <person name="Wu H.C."/>
            <person name="Kim C.J."/>
            <person name="Nguyen M."/>
            <person name="Pham P.K."/>
            <person name="Cheuk R.F."/>
            <person name="Karlin-Newmann G."/>
            <person name="Liu S.X."/>
            <person name="Lam B."/>
            <person name="Sakano H."/>
            <person name="Wu T."/>
            <person name="Yu G."/>
            <person name="Miranda M."/>
            <person name="Quach H.L."/>
            <person name="Tripp M."/>
            <person name="Chang C.H."/>
            <person name="Lee J.M."/>
            <person name="Toriumi M.J."/>
            <person name="Chan M.M."/>
            <person name="Tang C.C."/>
            <person name="Onodera C.S."/>
            <person name="Deng J.M."/>
            <person name="Akiyama K."/>
            <person name="Ansari Y."/>
            <person name="Arakawa T."/>
            <person name="Banh J."/>
            <person name="Banno F."/>
            <person name="Bowser L."/>
            <person name="Brooks S.Y."/>
            <person name="Carninci P."/>
            <person name="Chao Q."/>
            <person name="Choy N."/>
            <person name="Enju A."/>
            <person name="Goldsmith A.D."/>
            <person name="Gurjal M."/>
            <person name="Hansen N.F."/>
            <person name="Hayashizaki Y."/>
            <person name="Johnson-Hopson C."/>
            <person name="Hsuan V.W."/>
            <person name="Iida K."/>
            <person name="Karnes M."/>
            <person name="Khan S."/>
            <person name="Koesema E."/>
            <person name="Ishida J."/>
            <person name="Jiang P.X."/>
            <person name="Jones T."/>
            <person name="Kawai J."/>
            <person name="Kamiya A."/>
            <person name="Meyers C."/>
            <person name="Nakajima M."/>
            <person name="Narusaka M."/>
            <person name="Seki M."/>
            <person name="Sakurai T."/>
            <person name="Satou M."/>
            <person name="Tamse R."/>
            <person name="Vaysberg M."/>
            <person name="Wallender E.K."/>
            <person name="Wong C."/>
            <person name="Yamamura Y."/>
            <person name="Yuan S."/>
            <person name="Shinozaki K."/>
            <person name="Davis R.W."/>
            <person name="Theologis A."/>
            <person name="Ecker J.R."/>
        </authorList>
    </citation>
    <scope>NUCLEOTIDE SEQUENCE [LARGE SCALE MRNA]</scope>
    <source>
        <strain>cv. Columbia</strain>
    </source>
</reference>
<reference key="4">
    <citation type="journal article" date="2001" name="Plant Physiol.">
        <title>The organization of cytoplasmic ribosomal protein genes in the Arabidopsis genome.</title>
        <authorList>
            <person name="Barakat A."/>
            <person name="Szick-Miranda K."/>
            <person name="Chang I.-F."/>
            <person name="Guyot R."/>
            <person name="Blanc G."/>
            <person name="Cooke R."/>
            <person name="Delseny M."/>
            <person name="Bailey-Serres J."/>
        </authorList>
    </citation>
    <scope>GENE FAMILY ORGANIZATION</scope>
    <scope>NOMENCLATURE</scope>
</reference>
<reference key="5">
    <citation type="journal article" date="2023" name="Plant Cell">
        <title>An updated nomenclature for plant ribosomal protein genes.</title>
        <authorList>
            <person name="Scarpin M.R."/>
            <person name="Busche M."/>
            <person name="Martinez R.E."/>
            <person name="Harper L.C."/>
            <person name="Reiser L."/>
            <person name="Szakonyi D."/>
            <person name="Merchante C."/>
            <person name="Lan T."/>
            <person name="Xiong W."/>
            <person name="Mo B."/>
            <person name="Tang G."/>
            <person name="Chen X."/>
            <person name="Bailey-Serres J."/>
            <person name="Browning K.S."/>
            <person name="Brunkard J.O."/>
        </authorList>
    </citation>
    <scope>NOMENCLATURE</scope>
</reference>
<accession>Q9SIK2</accession>
<proteinExistence type="inferred from homology"/>
<keyword id="KW-0025">Alternative splicing</keyword>
<keyword id="KW-1185">Reference proteome</keyword>
<keyword id="KW-0687">Ribonucleoprotein</keyword>
<keyword id="KW-0689">Ribosomal protein</keyword>
<dbReference type="EMBL" id="AC007119">
    <property type="protein sequence ID" value="AAD23647.1"/>
    <property type="molecule type" value="Genomic_DNA"/>
</dbReference>
<dbReference type="EMBL" id="CP002685">
    <property type="protein sequence ID" value="AEC07197.1"/>
    <property type="molecule type" value="Genomic_DNA"/>
</dbReference>
<dbReference type="EMBL" id="AY048211">
    <property type="protein sequence ID" value="AAK82474.1"/>
    <property type="molecule type" value="mRNA"/>
</dbReference>
<dbReference type="EMBL" id="AY091695">
    <property type="protein sequence ID" value="AAM10294.1"/>
    <property type="molecule type" value="mRNA"/>
</dbReference>
<dbReference type="PIR" id="H84602">
    <property type="entry name" value="H84602"/>
</dbReference>
<dbReference type="RefSeq" id="NP_179752.1">
    <molecule id="Q9SIK2-1"/>
    <property type="nucleotide sequence ID" value="NM_127729.4"/>
</dbReference>
<dbReference type="SMR" id="Q9SIK2"/>
<dbReference type="BioGRID" id="2049">
    <property type="interactions" value="14"/>
</dbReference>
<dbReference type="FunCoup" id="Q9SIK2">
    <property type="interactions" value="3288"/>
</dbReference>
<dbReference type="IntAct" id="Q9SIK2">
    <property type="interactions" value="3"/>
</dbReference>
<dbReference type="STRING" id="3702.Q9SIK2"/>
<dbReference type="iPTMnet" id="Q9SIK2"/>
<dbReference type="MetOSite" id="Q9SIK2"/>
<dbReference type="PaxDb" id="3702-AT2G21580.1"/>
<dbReference type="EnsemblPlants" id="AT2G21580.1">
    <molecule id="Q9SIK2-1"/>
    <property type="protein sequence ID" value="AT2G21580.1"/>
    <property type="gene ID" value="AT2G21580"/>
</dbReference>
<dbReference type="GeneID" id="816696"/>
<dbReference type="Gramene" id="AT2G21580.1">
    <molecule id="Q9SIK2-1"/>
    <property type="protein sequence ID" value="AT2G21580.1"/>
    <property type="gene ID" value="AT2G21580"/>
</dbReference>
<dbReference type="KEGG" id="ath:AT2G21580"/>
<dbReference type="Araport" id="AT2G21580"/>
<dbReference type="TAIR" id="AT2G21580"/>
<dbReference type="eggNOG" id="KOG1767">
    <property type="taxonomic scope" value="Eukaryota"/>
</dbReference>
<dbReference type="HOGENOM" id="CLU_129470_0_1_1"/>
<dbReference type="InParanoid" id="Q9SIK2"/>
<dbReference type="OrthoDB" id="1107711at2759"/>
<dbReference type="PhylomeDB" id="Q9SIK2"/>
<dbReference type="CD-CODE" id="4299E36E">
    <property type="entry name" value="Nucleolus"/>
</dbReference>
<dbReference type="PRO" id="PR:Q9SIK2"/>
<dbReference type="Proteomes" id="UP000006548">
    <property type="component" value="Chromosome 2"/>
</dbReference>
<dbReference type="ExpressionAtlas" id="Q9SIK2">
    <property type="expression patterns" value="baseline and differential"/>
</dbReference>
<dbReference type="GO" id="GO:0022626">
    <property type="term" value="C:cytosolic ribosome"/>
    <property type="evidence" value="ECO:0007005"/>
    <property type="project" value="TAIR"/>
</dbReference>
<dbReference type="GO" id="GO:0022627">
    <property type="term" value="C:cytosolic small ribosomal subunit"/>
    <property type="evidence" value="ECO:0007005"/>
    <property type="project" value="TAIR"/>
</dbReference>
<dbReference type="GO" id="GO:0000325">
    <property type="term" value="C:plant-type vacuole"/>
    <property type="evidence" value="ECO:0007005"/>
    <property type="project" value="TAIR"/>
</dbReference>
<dbReference type="GO" id="GO:0009506">
    <property type="term" value="C:plasmodesma"/>
    <property type="evidence" value="ECO:0007005"/>
    <property type="project" value="TAIR"/>
</dbReference>
<dbReference type="GO" id="GO:0005773">
    <property type="term" value="C:vacuole"/>
    <property type="evidence" value="ECO:0007005"/>
    <property type="project" value="TAIR"/>
</dbReference>
<dbReference type="GO" id="GO:0003729">
    <property type="term" value="F:mRNA binding"/>
    <property type="evidence" value="ECO:0000314"/>
    <property type="project" value="TAIR"/>
</dbReference>
<dbReference type="GO" id="GO:0003735">
    <property type="term" value="F:structural constituent of ribosome"/>
    <property type="evidence" value="ECO:0000314"/>
    <property type="project" value="CAFA"/>
</dbReference>
<dbReference type="FunFam" id="3.30.63.20:FF:000001">
    <property type="entry name" value="40S ribosomal protein S25"/>
    <property type="match status" value="1"/>
</dbReference>
<dbReference type="Gene3D" id="3.30.63.20">
    <property type="match status" value="1"/>
</dbReference>
<dbReference type="InterPro" id="IPR004977">
    <property type="entry name" value="Ribosomal_eS25"/>
</dbReference>
<dbReference type="PANTHER" id="PTHR12850">
    <property type="entry name" value="40S RIBOSOMAL PROTEIN S25"/>
    <property type="match status" value="1"/>
</dbReference>
<dbReference type="Pfam" id="PF03297">
    <property type="entry name" value="Ribosomal_S25"/>
    <property type="match status" value="1"/>
</dbReference>
<name>RS252_ARATH</name>
<gene>
    <name type="primary">RPS25B</name>
    <name type="ordered locus">At2g21580</name>
    <name type="ORF">F2G1.15</name>
</gene>
<organism>
    <name type="scientific">Arabidopsis thaliana</name>
    <name type="common">Mouse-ear cress</name>
    <dbReference type="NCBI Taxonomy" id="3702"/>
    <lineage>
        <taxon>Eukaryota</taxon>
        <taxon>Viridiplantae</taxon>
        <taxon>Streptophyta</taxon>
        <taxon>Embryophyta</taxon>
        <taxon>Tracheophyta</taxon>
        <taxon>Spermatophyta</taxon>
        <taxon>Magnoliopsida</taxon>
        <taxon>eudicotyledons</taxon>
        <taxon>Gunneridae</taxon>
        <taxon>Pentapetalae</taxon>
        <taxon>rosids</taxon>
        <taxon>malvids</taxon>
        <taxon>Brassicales</taxon>
        <taxon>Brassicaceae</taxon>
        <taxon>Camelineae</taxon>
        <taxon>Arabidopsis</taxon>
    </lineage>
</organism>
<feature type="chain" id="PRO_0000192882" description="Small ribosomal subunit protein eS25y">
    <location>
        <begin position="1"/>
        <end position="108"/>
    </location>
</feature>
<feature type="region of interest" description="Disordered" evidence="1">
    <location>
        <begin position="1"/>
        <end position="36"/>
    </location>
</feature>
<feature type="compositionally biased region" description="Basic residues" evidence="1">
    <location>
        <begin position="22"/>
        <end position="31"/>
    </location>
</feature>